<reference key="1">
    <citation type="submission" date="2003-09" db="EMBL/GenBank/DDBJ databases">
        <title>Sgk is a glucocorticoid-induced gene in the chicken embryonic pituitary gland.</title>
        <authorList>
            <person name="Malkiewicz S.A."/>
            <person name="Porter T.E."/>
        </authorList>
    </citation>
    <scope>NUCLEOTIDE SEQUENCE [MRNA]</scope>
</reference>
<sequence length="432" mass="48890">MTVKAAEASGPALTYSKMRGMVAILIAFMKQRRMGLNDFIQKIATNSYACKHPEVQSILKISQPQEPELMNANPSPPPSPSQQINLGPSSNPHAKPSDFHFLKVIGKGSFGKVLLARHKAEEQFYAVKVLQKKAILKKKEEKHIMSERNVLLKNVKHPFLVGLHFSFQTADKLYFVLDYINGGELFYHLQRERCFLEPRARFYAAEIASALGYLHSLNIVYRDLKPENILLDSQGHIVLTDFGLCKENIEHNGTTSTFCGTPEYLAPEVLHKQPYDRTVDWWCLGAVLYEMLYGLPPFYSRNTAEMYDNILNKPLQLKPNITNSARHLLEGLLQKDRTKRLGAKEDFTEIKNHIFFSPINWDDLINKKITPPFNPNVSGPSDLRHFDPEFTDEPVPNSIGQSPDSILITASVKEAAEAFLGFSYAPPVDSFL</sequence>
<protein>
    <recommendedName>
        <fullName>Serine/threonine-protein kinase Sgk1</fullName>
        <ecNumber>2.7.11.1</ecNumber>
    </recommendedName>
    <alternativeName>
        <fullName>Serum/glucocorticoid-regulated kinase 1</fullName>
    </alternativeName>
</protein>
<feature type="chain" id="PRO_0000380130" description="Serine/threonine-protein kinase Sgk1">
    <location>
        <begin position="1"/>
        <end position="432"/>
    </location>
</feature>
<feature type="domain" description="Protein kinase" evidence="2">
    <location>
        <begin position="99"/>
        <end position="356"/>
    </location>
</feature>
<feature type="domain" description="AGC-kinase C-terminal" evidence="3">
    <location>
        <begin position="357"/>
        <end position="432"/>
    </location>
</feature>
<feature type="region of interest" description="Disordered" evidence="5">
    <location>
        <begin position="67"/>
        <end position="93"/>
    </location>
</feature>
<feature type="compositionally biased region" description="Polar residues" evidence="5">
    <location>
        <begin position="82"/>
        <end position="92"/>
    </location>
</feature>
<feature type="active site" description="Proton acceptor" evidence="2 4">
    <location>
        <position position="223"/>
    </location>
</feature>
<feature type="binding site" evidence="2">
    <location>
        <begin position="105"/>
        <end position="113"/>
    </location>
    <ligand>
        <name>ATP</name>
        <dbReference type="ChEBI" id="CHEBI:30616"/>
    </ligand>
</feature>
<feature type="binding site" evidence="2">
    <location>
        <position position="128"/>
    </location>
    <ligand>
        <name>ATP</name>
        <dbReference type="ChEBI" id="CHEBI:30616"/>
    </ligand>
</feature>
<proteinExistence type="evidence at transcript level"/>
<comment type="function">
    <text evidence="1">Protein kinase that may play an important role in cellular stress response. May be involved in the regulation of processes such as cell survival, neuronal excitability and renal sodium excretion (By similarity).</text>
</comment>
<comment type="catalytic activity">
    <reaction>
        <text>L-seryl-[protein] + ATP = O-phospho-L-seryl-[protein] + ADP + H(+)</text>
        <dbReference type="Rhea" id="RHEA:17989"/>
        <dbReference type="Rhea" id="RHEA-COMP:9863"/>
        <dbReference type="Rhea" id="RHEA-COMP:11604"/>
        <dbReference type="ChEBI" id="CHEBI:15378"/>
        <dbReference type="ChEBI" id="CHEBI:29999"/>
        <dbReference type="ChEBI" id="CHEBI:30616"/>
        <dbReference type="ChEBI" id="CHEBI:83421"/>
        <dbReference type="ChEBI" id="CHEBI:456216"/>
        <dbReference type="EC" id="2.7.11.1"/>
    </reaction>
</comment>
<comment type="catalytic activity">
    <reaction>
        <text>L-threonyl-[protein] + ATP = O-phospho-L-threonyl-[protein] + ADP + H(+)</text>
        <dbReference type="Rhea" id="RHEA:46608"/>
        <dbReference type="Rhea" id="RHEA-COMP:11060"/>
        <dbReference type="Rhea" id="RHEA-COMP:11605"/>
        <dbReference type="ChEBI" id="CHEBI:15378"/>
        <dbReference type="ChEBI" id="CHEBI:30013"/>
        <dbReference type="ChEBI" id="CHEBI:30616"/>
        <dbReference type="ChEBI" id="CHEBI:61977"/>
        <dbReference type="ChEBI" id="CHEBI:456216"/>
        <dbReference type="EC" id="2.7.11.1"/>
    </reaction>
</comment>
<comment type="subcellular location">
    <subcellularLocation>
        <location evidence="1">Cytoplasm</location>
    </subcellularLocation>
    <subcellularLocation>
        <location evidence="1">Nucleus</location>
    </subcellularLocation>
    <subcellularLocation>
        <location evidence="1">Endoplasmic reticulum</location>
    </subcellularLocation>
</comment>
<comment type="similarity">
    <text evidence="6">Belongs to the protein kinase superfamily. AGC Ser/Thr protein kinase family.</text>
</comment>
<name>SGK1_CHICK</name>
<gene>
    <name type="primary">SGK1</name>
    <name type="synonym">SGK</name>
</gene>
<dbReference type="EC" id="2.7.11.1"/>
<dbReference type="EMBL" id="AY380825">
    <property type="protein sequence ID" value="AAQ88435.1"/>
    <property type="molecule type" value="mRNA"/>
</dbReference>
<dbReference type="RefSeq" id="NP_989807.1">
    <property type="nucleotide sequence ID" value="NM_204476.2"/>
</dbReference>
<dbReference type="SMR" id="Q6U1I9"/>
<dbReference type="FunCoup" id="Q6U1I9">
    <property type="interactions" value="290"/>
</dbReference>
<dbReference type="STRING" id="9031.ENSGALP00000068769"/>
<dbReference type="PaxDb" id="9031-ENSGALP00000031130"/>
<dbReference type="Ensembl" id="ENSGALT00010015194.1">
    <property type="protein sequence ID" value="ENSGALP00010008927.1"/>
    <property type="gene ID" value="ENSGALG00010006359.1"/>
</dbReference>
<dbReference type="GeneID" id="395133"/>
<dbReference type="KEGG" id="gga:395133"/>
<dbReference type="CTD" id="6446"/>
<dbReference type="VEuPathDB" id="HostDB:geneid_395133"/>
<dbReference type="eggNOG" id="KOG0598">
    <property type="taxonomic scope" value="Eukaryota"/>
</dbReference>
<dbReference type="GeneTree" id="ENSGT00940000155726"/>
<dbReference type="HOGENOM" id="CLU_000288_63_5_1"/>
<dbReference type="InParanoid" id="Q6U1I9"/>
<dbReference type="OrthoDB" id="63267at2759"/>
<dbReference type="PhylomeDB" id="Q6U1I9"/>
<dbReference type="TreeFam" id="TF320906"/>
<dbReference type="Reactome" id="R-GGA-1257604">
    <property type="pathway name" value="PIP3 activates AKT signaling"/>
</dbReference>
<dbReference type="Reactome" id="R-GGA-2672351">
    <property type="pathway name" value="Stimuli-sensing channels"/>
</dbReference>
<dbReference type="Reactome" id="R-GGA-6804757">
    <property type="pathway name" value="Regulation of TP53 Degradation"/>
</dbReference>
<dbReference type="Reactome" id="R-GGA-9031628">
    <property type="pathway name" value="NGF-stimulated transcription"/>
</dbReference>
<dbReference type="PRO" id="PR:Q6U1I9"/>
<dbReference type="Proteomes" id="UP000000539">
    <property type="component" value="Chromosome 3"/>
</dbReference>
<dbReference type="Bgee" id="ENSGALG00000013971">
    <property type="expression patterns" value="Expressed in lung and 13 other cell types or tissues"/>
</dbReference>
<dbReference type="GO" id="GO:0005737">
    <property type="term" value="C:cytoplasm"/>
    <property type="evidence" value="ECO:0000318"/>
    <property type="project" value="GO_Central"/>
</dbReference>
<dbReference type="GO" id="GO:0005783">
    <property type="term" value="C:endoplasmic reticulum"/>
    <property type="evidence" value="ECO:0007669"/>
    <property type="project" value="UniProtKB-SubCell"/>
</dbReference>
<dbReference type="GO" id="GO:0005634">
    <property type="term" value="C:nucleus"/>
    <property type="evidence" value="ECO:0000318"/>
    <property type="project" value="GO_Central"/>
</dbReference>
<dbReference type="GO" id="GO:0005524">
    <property type="term" value="F:ATP binding"/>
    <property type="evidence" value="ECO:0007669"/>
    <property type="project" value="UniProtKB-KW"/>
</dbReference>
<dbReference type="GO" id="GO:0015459">
    <property type="term" value="F:potassium channel regulator activity"/>
    <property type="evidence" value="ECO:0000318"/>
    <property type="project" value="GO_Central"/>
</dbReference>
<dbReference type="GO" id="GO:0106310">
    <property type="term" value="F:protein serine kinase activity"/>
    <property type="evidence" value="ECO:0007669"/>
    <property type="project" value="RHEA"/>
</dbReference>
<dbReference type="GO" id="GO:0004674">
    <property type="term" value="F:protein serine/threonine kinase activity"/>
    <property type="evidence" value="ECO:0000318"/>
    <property type="project" value="GO_Central"/>
</dbReference>
<dbReference type="GO" id="GO:0006915">
    <property type="term" value="P:apoptotic process"/>
    <property type="evidence" value="ECO:0007669"/>
    <property type="project" value="UniProtKB-KW"/>
</dbReference>
<dbReference type="GO" id="GO:0035556">
    <property type="term" value="P:intracellular signal transduction"/>
    <property type="evidence" value="ECO:0000318"/>
    <property type="project" value="GO_Central"/>
</dbReference>
<dbReference type="GO" id="GO:0048812">
    <property type="term" value="P:neuron projection morphogenesis"/>
    <property type="evidence" value="ECO:0000318"/>
    <property type="project" value="GO_Central"/>
</dbReference>
<dbReference type="CDD" id="cd05575">
    <property type="entry name" value="STKc_SGK"/>
    <property type="match status" value="1"/>
</dbReference>
<dbReference type="FunFam" id="1.10.510.10:FF:000065">
    <property type="entry name" value="Non-specific serine/threonine protein kinase"/>
    <property type="match status" value="1"/>
</dbReference>
<dbReference type="FunFam" id="3.30.200.20:FF:000030">
    <property type="entry name" value="Non-specific serine/threonine protein kinase"/>
    <property type="match status" value="1"/>
</dbReference>
<dbReference type="Gene3D" id="3.30.200.20">
    <property type="entry name" value="Phosphorylase Kinase, domain 1"/>
    <property type="match status" value="1"/>
</dbReference>
<dbReference type="Gene3D" id="1.10.510.10">
    <property type="entry name" value="Transferase(Phosphotransferase) domain 1"/>
    <property type="match status" value="1"/>
</dbReference>
<dbReference type="InterPro" id="IPR000961">
    <property type="entry name" value="AGC-kinase_C"/>
</dbReference>
<dbReference type="InterPro" id="IPR011009">
    <property type="entry name" value="Kinase-like_dom_sf"/>
</dbReference>
<dbReference type="InterPro" id="IPR017892">
    <property type="entry name" value="Pkinase_C"/>
</dbReference>
<dbReference type="InterPro" id="IPR000719">
    <property type="entry name" value="Prot_kinase_dom"/>
</dbReference>
<dbReference type="InterPro" id="IPR017441">
    <property type="entry name" value="Protein_kinase_ATP_BS"/>
</dbReference>
<dbReference type="InterPro" id="IPR008271">
    <property type="entry name" value="Ser/Thr_kinase_AS"/>
</dbReference>
<dbReference type="PANTHER" id="PTHR24351">
    <property type="entry name" value="RIBOSOMAL PROTEIN S6 KINASE"/>
    <property type="match status" value="1"/>
</dbReference>
<dbReference type="Pfam" id="PF00069">
    <property type="entry name" value="Pkinase"/>
    <property type="match status" value="1"/>
</dbReference>
<dbReference type="Pfam" id="PF00433">
    <property type="entry name" value="Pkinase_C"/>
    <property type="match status" value="1"/>
</dbReference>
<dbReference type="SMART" id="SM00133">
    <property type="entry name" value="S_TK_X"/>
    <property type="match status" value="1"/>
</dbReference>
<dbReference type="SMART" id="SM00220">
    <property type="entry name" value="S_TKc"/>
    <property type="match status" value="1"/>
</dbReference>
<dbReference type="SUPFAM" id="SSF56112">
    <property type="entry name" value="Protein kinase-like (PK-like)"/>
    <property type="match status" value="1"/>
</dbReference>
<dbReference type="PROSITE" id="PS51285">
    <property type="entry name" value="AGC_KINASE_CTER"/>
    <property type="match status" value="1"/>
</dbReference>
<dbReference type="PROSITE" id="PS00107">
    <property type="entry name" value="PROTEIN_KINASE_ATP"/>
    <property type="match status" value="1"/>
</dbReference>
<dbReference type="PROSITE" id="PS50011">
    <property type="entry name" value="PROTEIN_KINASE_DOM"/>
    <property type="match status" value="1"/>
</dbReference>
<dbReference type="PROSITE" id="PS00108">
    <property type="entry name" value="PROTEIN_KINASE_ST"/>
    <property type="match status" value="1"/>
</dbReference>
<organism>
    <name type="scientific">Gallus gallus</name>
    <name type="common">Chicken</name>
    <dbReference type="NCBI Taxonomy" id="9031"/>
    <lineage>
        <taxon>Eukaryota</taxon>
        <taxon>Metazoa</taxon>
        <taxon>Chordata</taxon>
        <taxon>Craniata</taxon>
        <taxon>Vertebrata</taxon>
        <taxon>Euteleostomi</taxon>
        <taxon>Archelosauria</taxon>
        <taxon>Archosauria</taxon>
        <taxon>Dinosauria</taxon>
        <taxon>Saurischia</taxon>
        <taxon>Theropoda</taxon>
        <taxon>Coelurosauria</taxon>
        <taxon>Aves</taxon>
        <taxon>Neognathae</taxon>
        <taxon>Galloanserae</taxon>
        <taxon>Galliformes</taxon>
        <taxon>Phasianidae</taxon>
        <taxon>Phasianinae</taxon>
        <taxon>Gallus</taxon>
    </lineage>
</organism>
<keyword id="KW-0053">Apoptosis</keyword>
<keyword id="KW-0067">ATP-binding</keyword>
<keyword id="KW-0963">Cytoplasm</keyword>
<keyword id="KW-0256">Endoplasmic reticulum</keyword>
<keyword id="KW-0418">Kinase</keyword>
<keyword id="KW-0547">Nucleotide-binding</keyword>
<keyword id="KW-0539">Nucleus</keyword>
<keyword id="KW-0597">Phosphoprotein</keyword>
<keyword id="KW-1185">Reference proteome</keyword>
<keyword id="KW-0723">Serine/threonine-protein kinase</keyword>
<keyword id="KW-0346">Stress response</keyword>
<keyword id="KW-0808">Transferase</keyword>
<accession>Q6U1I9</accession>
<evidence type="ECO:0000250" key="1"/>
<evidence type="ECO:0000255" key="2">
    <source>
        <dbReference type="PROSITE-ProRule" id="PRU00159"/>
    </source>
</evidence>
<evidence type="ECO:0000255" key="3">
    <source>
        <dbReference type="PROSITE-ProRule" id="PRU00618"/>
    </source>
</evidence>
<evidence type="ECO:0000255" key="4">
    <source>
        <dbReference type="PROSITE-ProRule" id="PRU10027"/>
    </source>
</evidence>
<evidence type="ECO:0000256" key="5">
    <source>
        <dbReference type="SAM" id="MobiDB-lite"/>
    </source>
</evidence>
<evidence type="ECO:0000305" key="6"/>